<feature type="transit peptide" description="Chloroplast" evidence="6">
    <location>
        <begin position="1"/>
        <end position="50"/>
    </location>
</feature>
<feature type="chain" id="PRO_5000050749" description="4-hydroxy-7-methoxy-3-oxo-3,4-dihydro-2H-1,4-benzoxazin-2-yl glucoside beta-D-glucosidase 1a, chloroplastic" evidence="4">
    <location>
        <begin position="51"/>
        <end position="569"/>
    </location>
</feature>
<feature type="active site" description="Proton donor" evidence="2">
    <location>
        <position position="240"/>
    </location>
</feature>
<feature type="active site" description="Nucleophile" evidence="5">
    <location>
        <position position="456"/>
    </location>
</feature>
<feature type="binding site" evidence="2">
    <location>
        <position position="92"/>
    </location>
    <ligand>
        <name>a beta-D-glucoside</name>
        <dbReference type="ChEBI" id="CHEBI:22798"/>
    </ligand>
</feature>
<feature type="binding site" evidence="2">
    <location>
        <position position="194"/>
    </location>
    <ligand>
        <name>a beta-D-glucoside</name>
        <dbReference type="ChEBI" id="CHEBI:22798"/>
    </ligand>
</feature>
<feature type="binding site" evidence="2">
    <location>
        <begin position="239"/>
        <end position="240"/>
    </location>
    <ligand>
        <name>a beta-D-glucoside</name>
        <dbReference type="ChEBI" id="CHEBI:22798"/>
    </ligand>
</feature>
<feature type="binding site" evidence="2">
    <location>
        <position position="383"/>
    </location>
    <ligand>
        <name>a beta-D-glucoside</name>
        <dbReference type="ChEBI" id="CHEBI:22798"/>
    </ligand>
</feature>
<feature type="binding site" evidence="3">
    <location>
        <position position="456"/>
    </location>
    <ligand>
        <name>a beta-D-glucoside</name>
        <dbReference type="ChEBI" id="CHEBI:22798"/>
    </ligand>
</feature>
<feature type="binding site" evidence="2">
    <location>
        <position position="504"/>
    </location>
    <ligand>
        <name>a beta-D-glucoside</name>
        <dbReference type="ChEBI" id="CHEBI:22798"/>
    </ligand>
</feature>
<feature type="binding site" evidence="2">
    <location>
        <begin position="511"/>
        <end position="512"/>
    </location>
    <ligand>
        <name>a beta-D-glucoside</name>
        <dbReference type="ChEBI" id="CHEBI:22798"/>
    </ligand>
</feature>
<feature type="binding site" evidence="1">
    <location>
        <position position="520"/>
    </location>
    <ligand>
        <name>a beta-D-glucoside</name>
        <dbReference type="ChEBI" id="CHEBI:22798"/>
    </ligand>
</feature>
<feature type="disulfide bond" evidence="2">
    <location>
        <begin position="259"/>
        <end position="265"/>
    </location>
</feature>
<feature type="mutagenesis site" description="Total loss of activity." evidence="7">
    <original>E</original>
    <variation>A</variation>
    <location>
        <position position="240"/>
    </location>
</feature>
<feature type="mutagenesis site" description="99% loss of activity with DIBOA-Glc and DIMBOA-Glc." evidence="7">
    <original>F</original>
    <variation>A</variation>
    <location>
        <position position="247"/>
    </location>
</feature>
<feature type="mutagenesis site" description="88% loss of activity with DIBOA-Glc and DIMBOA-Glc." evidence="7">
    <original>Y</original>
    <variation>A</variation>
    <location>
        <position position="427"/>
    </location>
</feature>
<feature type="mutagenesis site" description="77% loss of activity with DIBOA-Glc and 30% with DIMBOA-Glc." evidence="7">
    <original>Y</original>
    <variation>F</variation>
    <location>
        <position position="427"/>
    </location>
</feature>
<feature type="mutagenesis site" description="Total loss of activity." evidence="7">
    <original>E</original>
    <variation>A</variation>
    <location>
        <position position="456"/>
    </location>
</feature>
<feature type="mutagenesis site" description="16% loss of activity with DIBOA-Glc and 94% with DIMBOA-Glc." evidence="7">
    <original>S</original>
    <variation>F</variation>
    <location>
        <position position="513"/>
    </location>
</feature>
<feature type="mutagenesis site" description="43% loss of activity with DIBOA-Glc and 71% with DIMBOA-Glc." evidence="7">
    <original>F</original>
    <variation>Y</variation>
    <location>
        <position position="520"/>
    </location>
</feature>
<reference key="1">
    <citation type="journal article" date="2006" name="Plant Physiol.">
        <title>Molecular and structural characterization of hexameric beta-D-glucosidases in wheat and rye.</title>
        <authorList>
            <person name="Sue M."/>
            <person name="Yamazaki K."/>
            <person name="Yajima S."/>
            <person name="Nomura T."/>
            <person name="Matsukawa T."/>
            <person name="Iwamura H."/>
            <person name="Miyamoto T."/>
        </authorList>
    </citation>
    <scope>NUCLEOTIDE SEQUENCE [MRNA]</scope>
    <scope>FUNCTION</scope>
    <scope>CATALYTIC ACTIVITY</scope>
    <scope>DEVELOPMENTAL STAGE</scope>
    <scope>SUBUNIT</scope>
    <scope>MUTAGENESIS OF GLU-240; PHE-247; TYR-427; GLU-456; SER-513 AND PHE-520</scope>
    <source>
        <strain>cv. Chinese Spring</strain>
        <tissue>Shoot</tissue>
    </source>
</reference>
<reference key="2">
    <citation type="journal article" date="2000" name="Planta">
        <title>Purification and characterization of a hydroxamic acid glucoside beta-glucosidase from wheat (Triticum aestivum L.) seedlings.</title>
        <authorList>
            <person name="Sue M."/>
            <person name="Ishihara A."/>
            <person name="Iwamura H."/>
        </authorList>
    </citation>
    <scope>PROTEIN SEQUENCE OF 51-62</scope>
    <scope>FUNCTION</scope>
    <scope>CATALYTIC ACTIVITY</scope>
    <scope>BIOPHYSICOCHEMICAL PROPERTIES</scope>
    <scope>TISSUE SPECIFICITY</scope>
    <scope>SUBUNIT</scope>
    <source>
        <strain>cv. Asakazekomugi</strain>
    </source>
</reference>
<gene>
    <name type="primary">GLU1A</name>
</gene>
<evidence type="ECO:0000250" key="1">
    <source>
        <dbReference type="UniProtKB" id="Q1XH05"/>
    </source>
</evidence>
<evidence type="ECO:0000250" key="2">
    <source>
        <dbReference type="UniProtKB" id="Q7XSK0"/>
    </source>
</evidence>
<evidence type="ECO:0000250" key="3">
    <source>
        <dbReference type="UniProtKB" id="Q9SPP9"/>
    </source>
</evidence>
<evidence type="ECO:0000255" key="4"/>
<evidence type="ECO:0000255" key="5">
    <source>
        <dbReference type="PROSITE-ProRule" id="PRU10055"/>
    </source>
</evidence>
<evidence type="ECO:0000269" key="6">
    <source>
    </source>
</evidence>
<evidence type="ECO:0000269" key="7">
    <source>
    </source>
</evidence>
<evidence type="ECO:0000305" key="8"/>
<organism>
    <name type="scientific">Triticum aestivum</name>
    <name type="common">Wheat</name>
    <dbReference type="NCBI Taxonomy" id="4565"/>
    <lineage>
        <taxon>Eukaryota</taxon>
        <taxon>Viridiplantae</taxon>
        <taxon>Streptophyta</taxon>
        <taxon>Embryophyta</taxon>
        <taxon>Tracheophyta</taxon>
        <taxon>Spermatophyta</taxon>
        <taxon>Magnoliopsida</taxon>
        <taxon>Liliopsida</taxon>
        <taxon>Poales</taxon>
        <taxon>Poaceae</taxon>
        <taxon>BOP clade</taxon>
        <taxon>Pooideae</taxon>
        <taxon>Triticodae</taxon>
        <taxon>Triticeae</taxon>
        <taxon>Triticinae</taxon>
        <taxon>Triticum</taxon>
    </lineage>
</organism>
<accession>Q1XIR9</accession>
<sequence length="569" mass="64508">MALLAAATLNPTTHLSLRSRAGRNSENLWLRSAASSQKSKGRFCNLTIRAGTPSKPAEPIGPVFTKLKPWQIPKRDWFDKDFLFGASTSAYQIEGAWNEDGKGPSTWDHFCHTYPERISDRTNGDVAANSYHLYEEDVKALKDMGMKVYRFSIAWSRILPDGTGKVNQAGIDYYNKLINSLIDNDIVPYVTIWHWDTPQALEDKYGGFLNRKIVDDYKQFAEVCFKNFGDRVKNWFTFNEPHTYCCFSYGEGIHAPGRCSPGMDCAVPKGDSLREPYTAGHHILLAHAEAVELFKACYNKHGDSKIGMAFDVMGYEPFQDSFLDDQARERSIDYNLGWFLEPVVRGDYPFSMRSLIGDRLPKFTKEEQEKLASSCDIMGLNYYTSRFSKHIDISSDFTPKLNTDDAYASSETKGSDGNDIGPITGTYWIYMYPKGLTDLLLIMKEKYGNPPIFITENGIADVDSDPTMTDPLDDWKRLDYLQRHISAVKDAIDQGADVRGHFTWGLIDNFEWSLGYSSRFGLVYIDKKDGNKRKLKKSAKWFAKFNSVPKRLLKTTNNNATVTVTSVSV</sequence>
<proteinExistence type="evidence at protein level"/>
<protein>
    <recommendedName>
        <fullName>4-hydroxy-7-methoxy-3-oxo-3,4-dihydro-2H-1,4-benzoxazin-2-yl glucoside beta-D-glucosidase 1a, chloroplastic</fullName>
        <ecNumber evidence="6 7">3.2.1.182</ecNumber>
    </recommendedName>
    <alternativeName>
        <fullName>Beta-glucosidase 1a</fullName>
        <shortName>TaGlu1a</shortName>
        <ecNumber evidence="6 7">3.2.1.21</ecNumber>
    </alternativeName>
</protein>
<name>HGL1A_WHEAT</name>
<keyword id="KW-0150">Chloroplast</keyword>
<keyword id="KW-0903">Direct protein sequencing</keyword>
<keyword id="KW-1015">Disulfide bond</keyword>
<keyword id="KW-0326">Glycosidase</keyword>
<keyword id="KW-0378">Hydrolase</keyword>
<keyword id="KW-0934">Plastid</keyword>
<keyword id="KW-1185">Reference proteome</keyword>
<keyword id="KW-0809">Transit peptide</keyword>
<comment type="function">
    <text evidence="6 7">Acts in defense of young plant parts against pests via the production of hydroxamic acids from hydroxamic acid glucosides. Enzymatic activity is highly correlated with plant growth. The preferred substrate is DIMBOA-beta-D-glucoside.</text>
</comment>
<comment type="catalytic activity">
    <reaction evidence="6 7">
        <text>Hydrolysis of terminal, non-reducing beta-D-glucosyl residues with release of beta-D-glucose.</text>
        <dbReference type="EC" id="3.2.1.21"/>
    </reaction>
</comment>
<comment type="catalytic activity">
    <reaction evidence="6 7">
        <text>DIMBOA beta-D-glucoside + H2O = DIMBOA + D-glucose</text>
        <dbReference type="Rhea" id="RHEA:33975"/>
        <dbReference type="ChEBI" id="CHEBI:4167"/>
        <dbReference type="ChEBI" id="CHEBI:15377"/>
        <dbReference type="ChEBI" id="CHEBI:18048"/>
        <dbReference type="ChEBI" id="CHEBI:37573"/>
        <dbReference type="EC" id="3.2.1.182"/>
    </reaction>
</comment>
<comment type="catalytic activity">
    <reaction evidence="6 7">
        <text>DIBOA beta-D-glucoside + H2O = DIBOA + D-glucose</text>
        <dbReference type="Rhea" id="RHEA:33979"/>
        <dbReference type="ChEBI" id="CHEBI:4167"/>
        <dbReference type="ChEBI" id="CHEBI:15377"/>
        <dbReference type="ChEBI" id="CHEBI:63558"/>
        <dbReference type="ChEBI" id="CHEBI:63670"/>
        <dbReference type="EC" id="3.2.1.182"/>
    </reaction>
</comment>
<comment type="biophysicochemical properties">
    <kinetics>
        <KM evidence="6">1.34 mM for DIBOA-beta-D-glucoside (with native hexamer)</KM>
        <KM evidence="6">1.4 mM for DIBOA-beta-D-glucoside (with recombinant enzyme)</KM>
        <KM evidence="6">0.272 mM for DIMBOA-beta-D-glucoside (with native hexamer)</KM>
        <KM evidence="6">0.36 mM for DIMBOA-beta-D-glucoside (with recombinant enzyme)</KM>
        <KM evidence="6">2.02 mM for HBOA-beta-D-glucoside (with native hexamer)</KM>
        <KM evidence="6">0.32 mM for HMBOA-beta-D-glucoside (with native hexamer)</KM>
        <KM evidence="6">1.7 mM for p-nitrophenyl beta-D-glucopyranoside (with native hexamer)</KM>
        <KM evidence="6">1.85 mM for p-nitrophenyl beta-D-glucopyranoside (with recombinant enzyme)</KM>
        <KM evidence="6">1.78 mM for p-nitrophenyl beta-D-galactopyranoside (with native hexamer)</KM>
        <KM evidence="6">3.11 mM for p-nitrophenyl beta-D-xyloside (with native hexamer)</KM>
        <KM evidence="6">0.67 mM for p-nitrophenyl beta-D-fucoside (with native hexamer)</KM>
        <KM evidence="6">0.24 mM for esculin (with native hexamer)</KM>
        <Vmax evidence="6">1060.0 nmol/sec/mg enzyme with DIBOA-beta-D-glucoside as substrate (with native hexamer)</Vmax>
        <Vmax evidence="6">4100.0 nmol/sec/mg enzyme with DIMBOA-beta-D-glucoside as substrate (with native hexamer)</Vmax>
        <Vmax evidence="6">5200.0 nmol/sec/mg enzyme with DIMBOA-beta-D-glucoside as substrate (with recombinant enzyme)</Vmax>
        <Vmax evidence="6">220.0 nmol/sec/mg enzyme with HBOA-beta-D-glucoside as substrate (with native hexamer)</Vmax>
        <Vmax evidence="6">540.0 nmol/sec/mg enzyme with HMBOA-beta-D-glucoside as substrate (with native hexamer)</Vmax>
        <Vmax evidence="6">520.0 nmol/sec/mg enzyme with p-nitrophenyl beta-D-glucopyranoside as substrate (with native hexamer)</Vmax>
        <Vmax evidence="6">47.0 nmol/sec/mg enzyme with p-nitrophenyl beta-D-galactopyranoside as substrate (with native hexamer)</Vmax>
        <Vmax evidence="6">35.0 nmol/sec/mg enzyme with p-nitrophenyl beta-D-xyloside as substrate (with native hexamer)</Vmax>
        <Vmax evidence="6">1080.0 nmol/sec/mg enzyme with p-nitrophenyl beta-D-fucoside as substrate (with native hexamer)</Vmax>
        <Vmax evidence="6">320.0 nmol/sec/mg enzyme with esculin as substrate (with native hexamer)</Vmax>
        <text>kcat is 48.8 sec(-1) with DIBOA-beta-D-glucoside as substrate (with recombinant enzyme). kcat is 338 sec(-1) with DIMBOA-beta-D-glucoside as substrate (with recombinant enzyme). kcat is 99.2 sec(-1) with p-nitrophenyl beta-D-glucopyranoside as substrate (with recombinant enzyme).</text>
    </kinetics>
    <phDependence>
        <text evidence="6">Optimum pH is 5.5.</text>
    </phDependence>
</comment>
<comment type="subunit">
    <text evidence="6 7">Homo- and heterohexamers.</text>
</comment>
<comment type="subcellular location">
    <subcellularLocation>
        <location evidence="8">Plastid</location>
        <location evidence="8">Chloroplast</location>
    </subcellularLocation>
</comment>
<comment type="tissue specificity">
    <text evidence="6">Expressed in young seedlings early after germination.</text>
</comment>
<comment type="developmental stage">
    <text evidence="7">Peak of expression 36 to 48 hours after imbibition.</text>
</comment>
<comment type="miscellaneous">
    <text>Wheat is a hexaploid with three different genomes that contains at least four genes coding for GLU1: GLU1A (AC Q1XIR9), GLU1B (AC Q1XH05), GLU1C (AC Q1XH04) and GLU1D (AC D5MTF8). The monomers can aggregate in diverse combinations, reflecting the several isozymes found in the native enzyme described in PubMed:10750901.</text>
</comment>
<comment type="similarity">
    <text evidence="8">Belongs to the glycosyl hydrolase 1 family.</text>
</comment>
<dbReference type="EC" id="3.2.1.182" evidence="6 7"/>
<dbReference type="EC" id="3.2.1.21" evidence="6 7"/>
<dbReference type="EMBL" id="AB100035">
    <property type="protein sequence ID" value="BAE92901.1"/>
    <property type="molecule type" value="mRNA"/>
</dbReference>
<dbReference type="SMR" id="Q1XIR9"/>
<dbReference type="STRING" id="4565.Q1XIR9"/>
<dbReference type="CAZy" id="GH1">
    <property type="family name" value="Glycoside Hydrolase Family 1"/>
</dbReference>
<dbReference type="EnsemblPlants" id="TraesCS2B02G600200.2">
    <property type="protein sequence ID" value="TraesCS2B02G600200.2"/>
    <property type="gene ID" value="TraesCS2B02G600200"/>
</dbReference>
<dbReference type="EnsemblPlants" id="TraesCS2B03G1501600.2">
    <property type="protein sequence ID" value="TraesCS2B03G1501600.2.CDS"/>
    <property type="gene ID" value="TraesCS2B03G1501600"/>
</dbReference>
<dbReference type="EnsemblPlants" id="TraesNOR2B03G01085710.1">
    <property type="protein sequence ID" value="TraesNOR2B03G01085710.1"/>
    <property type="gene ID" value="TraesNOR2B03G01085710"/>
</dbReference>
<dbReference type="Gramene" id="TraesCS2B02G600200.2">
    <property type="protein sequence ID" value="TraesCS2B02G600200.2"/>
    <property type="gene ID" value="TraesCS2B02G600200"/>
</dbReference>
<dbReference type="Gramene" id="TraesCS2B03G1501600.2">
    <property type="protein sequence ID" value="TraesCS2B03G1501600.2.CDS"/>
    <property type="gene ID" value="TraesCS2B03G1501600"/>
</dbReference>
<dbReference type="Gramene" id="TraesNOR2B03G01085710.1">
    <property type="protein sequence ID" value="TraesNOR2B03G01085710.1"/>
    <property type="gene ID" value="TraesNOR2B03G01085710"/>
</dbReference>
<dbReference type="OMA" id="HRIQCIL"/>
<dbReference type="BRENDA" id="3.2.1.21">
    <property type="organism ID" value="6500"/>
</dbReference>
<dbReference type="SABIO-RK" id="Q1XIR9"/>
<dbReference type="Proteomes" id="UP000019116">
    <property type="component" value="Chromosome 2B"/>
</dbReference>
<dbReference type="ExpressionAtlas" id="Q1XIR9">
    <property type="expression patterns" value="baseline and differential"/>
</dbReference>
<dbReference type="GO" id="GO:0009507">
    <property type="term" value="C:chloroplast"/>
    <property type="evidence" value="ECO:0007669"/>
    <property type="project" value="UniProtKB-SubCell"/>
</dbReference>
<dbReference type="GO" id="GO:0008422">
    <property type="term" value="F:beta-glucosidase activity"/>
    <property type="evidence" value="ECO:0000318"/>
    <property type="project" value="GO_Central"/>
</dbReference>
<dbReference type="GO" id="GO:0102726">
    <property type="term" value="F:DIMBOA glucoside beta-D-glucosidase activity"/>
    <property type="evidence" value="ECO:0007669"/>
    <property type="project" value="UniProtKB-EC"/>
</dbReference>
<dbReference type="GO" id="GO:0005975">
    <property type="term" value="P:carbohydrate metabolic process"/>
    <property type="evidence" value="ECO:0007669"/>
    <property type="project" value="InterPro"/>
</dbReference>
<dbReference type="FunFam" id="3.20.20.80:FF:000041">
    <property type="entry name" value="Beta-glucosidase 7"/>
    <property type="match status" value="1"/>
</dbReference>
<dbReference type="Gene3D" id="3.20.20.80">
    <property type="entry name" value="Glycosidases"/>
    <property type="match status" value="1"/>
</dbReference>
<dbReference type="InterPro" id="IPR001360">
    <property type="entry name" value="Glyco_hydro_1"/>
</dbReference>
<dbReference type="InterPro" id="IPR018120">
    <property type="entry name" value="Glyco_hydro_1_AS"/>
</dbReference>
<dbReference type="InterPro" id="IPR033132">
    <property type="entry name" value="Glyco_hydro_1_N_CS"/>
</dbReference>
<dbReference type="InterPro" id="IPR017853">
    <property type="entry name" value="Glycoside_hydrolase_SF"/>
</dbReference>
<dbReference type="PANTHER" id="PTHR10353:SF326">
    <property type="entry name" value="4-HYDROXY-7-METHOXY-3-OXO-3,4-DIHYDRO-2H-1,4-BENZOXAZIN-2-YL GLUCOSIDE BETA-D-GLUCOSIDASE 1, CHLOROPLASTIC"/>
    <property type="match status" value="1"/>
</dbReference>
<dbReference type="PANTHER" id="PTHR10353">
    <property type="entry name" value="GLYCOSYL HYDROLASE"/>
    <property type="match status" value="1"/>
</dbReference>
<dbReference type="Pfam" id="PF00232">
    <property type="entry name" value="Glyco_hydro_1"/>
    <property type="match status" value="1"/>
</dbReference>
<dbReference type="PRINTS" id="PR00131">
    <property type="entry name" value="GLHYDRLASE1"/>
</dbReference>
<dbReference type="SUPFAM" id="SSF51445">
    <property type="entry name" value="(Trans)glycosidases"/>
    <property type="match status" value="1"/>
</dbReference>
<dbReference type="PROSITE" id="PS00572">
    <property type="entry name" value="GLYCOSYL_HYDROL_F1_1"/>
    <property type="match status" value="1"/>
</dbReference>
<dbReference type="PROSITE" id="PS00653">
    <property type="entry name" value="GLYCOSYL_HYDROL_F1_2"/>
    <property type="match status" value="1"/>
</dbReference>